<dbReference type="EC" id="2.7.7.108"/>
<dbReference type="EC" id="2.7.7.n6"/>
<dbReference type="EMBL" id="DQ845395">
    <property type="protein sequence ID" value="ABG90503.1"/>
    <property type="molecule type" value="mRNA"/>
</dbReference>
<dbReference type="EMBL" id="AE017354">
    <property type="protein sequence ID" value="AAU28524.1"/>
    <property type="molecule type" value="Genomic_DNA"/>
</dbReference>
<dbReference type="RefSeq" id="WP_010948166.1">
    <property type="nucleotide sequence ID" value="NC_002942.5"/>
</dbReference>
<dbReference type="RefSeq" id="YP_096471.1">
    <property type="nucleotide sequence ID" value="NC_002942.5"/>
</dbReference>
<dbReference type="PDB" id="2WWX">
    <property type="method" value="X-ray"/>
    <property type="resolution" value="1.50 A"/>
    <property type="chains" value="B=317-533"/>
</dbReference>
<dbReference type="PDB" id="3JZ9">
    <property type="method" value="X-ray"/>
    <property type="resolution" value="1.80 A"/>
    <property type="chains" value="A=340-533"/>
</dbReference>
<dbReference type="PDB" id="3JZA">
    <property type="method" value="X-ray"/>
    <property type="resolution" value="1.80 A"/>
    <property type="chains" value="B=340-533"/>
</dbReference>
<dbReference type="PDB" id="3L0I">
    <property type="method" value="X-ray"/>
    <property type="resolution" value="2.85 A"/>
    <property type="chains" value="A/C=193-550"/>
</dbReference>
<dbReference type="PDB" id="3L0M">
    <property type="method" value="X-ray"/>
    <property type="resolution" value="3.45 A"/>
    <property type="chains" value="A/B=317-647"/>
</dbReference>
<dbReference type="PDB" id="3N6O">
    <property type="method" value="X-ray"/>
    <property type="resolution" value="2.50 A"/>
    <property type="chains" value="A/B=340-647"/>
</dbReference>
<dbReference type="PDB" id="4MXP">
    <property type="method" value="X-ray"/>
    <property type="resolution" value="1.83 A"/>
    <property type="chains" value="A=330-647"/>
</dbReference>
<dbReference type="PDBsum" id="2WWX"/>
<dbReference type="PDBsum" id="3JZ9"/>
<dbReference type="PDBsum" id="3JZA"/>
<dbReference type="PDBsum" id="3L0I"/>
<dbReference type="PDBsum" id="3L0M"/>
<dbReference type="PDBsum" id="3N6O"/>
<dbReference type="PDBsum" id="4MXP"/>
<dbReference type="SMR" id="Q5ZSQ3"/>
<dbReference type="IntAct" id="Q5ZSQ3">
    <property type="interactions" value="1"/>
</dbReference>
<dbReference type="MINT" id="Q5ZSQ3"/>
<dbReference type="PaxDb" id="272624-lpg2464"/>
<dbReference type="GeneID" id="57036458"/>
<dbReference type="KEGG" id="lpn:lpg2464"/>
<dbReference type="PATRIC" id="fig|272624.6.peg.2613"/>
<dbReference type="eggNOG" id="ENOG5031EKF">
    <property type="taxonomic scope" value="Bacteria"/>
</dbReference>
<dbReference type="HOGENOM" id="CLU_428136_0_0_6"/>
<dbReference type="OrthoDB" id="5654346at2"/>
<dbReference type="SABIO-RK" id="Q5ZSQ3"/>
<dbReference type="EvolutionaryTrace" id="Q5ZSQ3"/>
<dbReference type="Proteomes" id="UP000000609">
    <property type="component" value="Chromosome"/>
</dbReference>
<dbReference type="GO" id="GO:0005576">
    <property type="term" value="C:extracellular region"/>
    <property type="evidence" value="ECO:0007669"/>
    <property type="project" value="UniProtKB-SubCell"/>
</dbReference>
<dbReference type="GO" id="GO:0044161">
    <property type="term" value="C:host cell cytoplasmic vesicle"/>
    <property type="evidence" value="ECO:0000250"/>
    <property type="project" value="UniProtKB"/>
</dbReference>
<dbReference type="GO" id="GO:0044162">
    <property type="term" value="C:host cell cytoplasmic vesicle membrane"/>
    <property type="evidence" value="ECO:0007669"/>
    <property type="project" value="UniProtKB-SubCell"/>
</dbReference>
<dbReference type="GO" id="GO:0016020">
    <property type="term" value="C:membrane"/>
    <property type="evidence" value="ECO:0007669"/>
    <property type="project" value="UniProtKB-KW"/>
</dbReference>
<dbReference type="GO" id="GO:0070733">
    <property type="term" value="F:AMPylase activity"/>
    <property type="evidence" value="ECO:0000314"/>
    <property type="project" value="UniProtKB"/>
</dbReference>
<dbReference type="GO" id="GO:0005524">
    <property type="term" value="F:ATP binding"/>
    <property type="evidence" value="ECO:0007669"/>
    <property type="project" value="UniProtKB-KW"/>
</dbReference>
<dbReference type="GO" id="GO:0005085">
    <property type="term" value="F:guanyl-nucleotide exchange factor activity"/>
    <property type="evidence" value="ECO:0000250"/>
    <property type="project" value="UniProtKB"/>
</dbReference>
<dbReference type="GO" id="GO:0070273">
    <property type="term" value="F:phosphatidylinositol-4-phosphate binding"/>
    <property type="evidence" value="ECO:0000314"/>
    <property type="project" value="UniProtKB"/>
</dbReference>
<dbReference type="GO" id="GO:0044600">
    <property type="term" value="F:protein guanylyltransferase activity"/>
    <property type="evidence" value="ECO:0000250"/>
    <property type="project" value="UniProtKB"/>
</dbReference>
<dbReference type="GO" id="GO:0031267">
    <property type="term" value="F:small GTPase binding"/>
    <property type="evidence" value="ECO:0000250"/>
    <property type="project" value="UniProtKB"/>
</dbReference>
<dbReference type="GO" id="GO:0018117">
    <property type="term" value="P:protein adenylylation"/>
    <property type="evidence" value="ECO:0000250"/>
    <property type="project" value="UniProtKB"/>
</dbReference>
<dbReference type="GO" id="GO:0018260">
    <property type="term" value="P:protein guanylylation"/>
    <property type="evidence" value="ECO:0000250"/>
    <property type="project" value="UniProtKB"/>
</dbReference>
<dbReference type="GO" id="GO:0006612">
    <property type="term" value="P:protein targeting to membrane"/>
    <property type="evidence" value="ECO:0000315"/>
    <property type="project" value="UniProtKB"/>
</dbReference>
<dbReference type="GO" id="GO:0043087">
    <property type="term" value="P:regulation of GTPase activity"/>
    <property type="evidence" value="ECO:0000250"/>
    <property type="project" value="UniProtKB"/>
</dbReference>
<dbReference type="CDD" id="cd11689">
    <property type="entry name" value="SidM_DrrA_GEF"/>
    <property type="match status" value="1"/>
</dbReference>
<dbReference type="Gene3D" id="1.10.357.170">
    <property type="match status" value="1"/>
</dbReference>
<dbReference type="Gene3D" id="1.20.120.1520">
    <property type="match status" value="1"/>
</dbReference>
<dbReference type="Gene3D" id="1.20.1280.280">
    <property type="match status" value="1"/>
</dbReference>
<dbReference type="Gene3D" id="1.20.1440.370">
    <property type="match status" value="2"/>
</dbReference>
<dbReference type="InterPro" id="IPR033784">
    <property type="entry name" value="DrrA_GEF_Leg_pneum"/>
</dbReference>
<dbReference type="InterPro" id="IPR028057">
    <property type="entry name" value="DrrA_P4M"/>
</dbReference>
<dbReference type="InterPro" id="IPR038346">
    <property type="entry name" value="DrrA_PI4P-bd_sf"/>
</dbReference>
<dbReference type="InterPro" id="IPR048717">
    <property type="entry name" value="SidM_N"/>
</dbReference>
<dbReference type="InterPro" id="IPR048718">
    <property type="entry name" value="SidM_Rab1_act"/>
</dbReference>
<dbReference type="Pfam" id="PF14860">
    <property type="entry name" value="DrrA_P4M"/>
    <property type="match status" value="1"/>
</dbReference>
<dbReference type="Pfam" id="PF20879">
    <property type="entry name" value="SidM_N"/>
    <property type="match status" value="1"/>
</dbReference>
<dbReference type="Pfam" id="PF20851">
    <property type="entry name" value="SidM_Rab1-act"/>
    <property type="match status" value="1"/>
</dbReference>
<comment type="function">
    <text evidence="2 3 4 5 6 7">Virulence effector that plays a key role in hijacking the host vesicular trafficking by recruiting the small guanosine triphosphatase (GTPase) Rab1 to the cytosolic face of the Legionella-containing vacuole (LCVs). Acts as a GDP-GTP exchange factor (GEF) for the small GTPase Rab1 (RAB1A, RAB1B or RAB1C), thereby converting Rab1 to an active GTP-bound state, leading to the incorporation of Rab1 into LCVs. Also shows RabGDI displacement factor (GDF) activity; however, this probably represents a passive activity following the GEF activity. Also acts as an adenylyltransferase by mediating the addition of adenosine 5'-monophosphate (AMP) to 'Tyr-77' of host RAB1B, thereby rendering RAB1B constitutively active. Also has adenylyltransferase activity towards Rab6 and Rab35. Also displays guanylyltransferase activity by mediating the addition of guanosine 5'-monophosphate (GMP) to host RAB1B in vitro; however such activity remains uncertain in vivo. Specifically binds phosphatidylinositol 4-phosphate (PtdIns(4)P) lipids on the cytosolic surface of the phagosomal membrane shortly after infection.</text>
</comment>
<comment type="catalytic activity">
    <reaction>
        <text>L-tyrosyl-[protein] + ATP = O-(5'-adenylyl)-L-tyrosyl-[protein] + diphosphate</text>
        <dbReference type="Rhea" id="RHEA:54288"/>
        <dbReference type="Rhea" id="RHEA-COMP:10136"/>
        <dbReference type="Rhea" id="RHEA-COMP:13846"/>
        <dbReference type="ChEBI" id="CHEBI:30616"/>
        <dbReference type="ChEBI" id="CHEBI:33019"/>
        <dbReference type="ChEBI" id="CHEBI:46858"/>
        <dbReference type="ChEBI" id="CHEBI:83624"/>
        <dbReference type="EC" id="2.7.7.108"/>
    </reaction>
</comment>
<comment type="catalytic activity">
    <reaction>
        <text>L-threonyl-[protein] + ATP = 3-O-(5'-adenylyl)-L-threonyl-[protein] + diphosphate</text>
        <dbReference type="Rhea" id="RHEA:54292"/>
        <dbReference type="Rhea" id="RHEA-COMP:11060"/>
        <dbReference type="Rhea" id="RHEA-COMP:13847"/>
        <dbReference type="ChEBI" id="CHEBI:30013"/>
        <dbReference type="ChEBI" id="CHEBI:30616"/>
        <dbReference type="ChEBI" id="CHEBI:33019"/>
        <dbReference type="ChEBI" id="CHEBI:138113"/>
        <dbReference type="EC" id="2.7.7.108"/>
    </reaction>
</comment>
<comment type="catalytic activity">
    <reaction>
        <text>L-tyrosyl-[protein] + GTP = O-(5'-guanylyl)-L-tyrosyl-[protein] + diphosphate</text>
        <dbReference type="Rhea" id="RHEA:54296"/>
        <dbReference type="Rhea" id="RHEA-COMP:10136"/>
        <dbReference type="Rhea" id="RHEA-COMP:13848"/>
        <dbReference type="ChEBI" id="CHEBI:33019"/>
        <dbReference type="ChEBI" id="CHEBI:37565"/>
        <dbReference type="ChEBI" id="CHEBI:46858"/>
        <dbReference type="ChEBI" id="CHEBI:138114"/>
        <dbReference type="EC" id="2.7.7.n6"/>
    </reaction>
</comment>
<comment type="subunit">
    <text evidence="4 6">Interacts with host RAB1A.</text>
</comment>
<comment type="interaction">
    <interactant intactId="EBI-7632432">
        <id>Q5ZSQ3</id>
    </interactant>
    <interactant intactId="EBI-716845">
        <id>P62820</id>
        <label>RAB1A</label>
    </interactant>
    <organismsDiffer>true</organismsDiffer>
    <experiments>7</experiments>
</comment>
<comment type="subcellular location">
    <subcellularLocation>
        <location evidence="2">Secreted</location>
    </subcellularLocation>
    <subcellularLocation>
        <location evidence="2">Host cytoplasmic vesicle membrane</location>
        <topology evidence="2">Peripheral membrane protein</topology>
    </subcellularLocation>
    <text>Translocated into the host cell via the type IV secretion system (T4SS). Membrane association is mediated by PtdIns(4)P-binding.</text>
</comment>
<comment type="domain">
    <text evidence="1">The P4M (PtdIns(4)P-binding) region mediates binding to PtdIns(4)P and membrane attachment.</text>
</comment>
<comment type="similarity">
    <text evidence="8">Belongs to the DrrA family.</text>
</comment>
<evidence type="ECO:0000250" key="1"/>
<evidence type="ECO:0000269" key="2">
    <source>
    </source>
</evidence>
<evidence type="ECO:0000269" key="3">
    <source>
    </source>
</evidence>
<evidence type="ECO:0000269" key="4">
    <source>
    </source>
</evidence>
<evidence type="ECO:0000269" key="5">
    <source>
    </source>
</evidence>
<evidence type="ECO:0000269" key="6">
    <source>
    </source>
</evidence>
<evidence type="ECO:0000269" key="7">
    <source>
    </source>
</evidence>
<evidence type="ECO:0000305" key="8"/>
<evidence type="ECO:0007829" key="9">
    <source>
        <dbReference type="PDB" id="2WWX"/>
    </source>
</evidence>
<evidence type="ECO:0007829" key="10">
    <source>
        <dbReference type="PDB" id="3JZ9"/>
    </source>
</evidence>
<evidence type="ECO:0007829" key="11">
    <source>
        <dbReference type="PDB" id="3JZA"/>
    </source>
</evidence>
<evidence type="ECO:0007829" key="12">
    <source>
        <dbReference type="PDB" id="3L0I"/>
    </source>
</evidence>
<evidence type="ECO:0007829" key="13">
    <source>
        <dbReference type="PDB" id="4MXP"/>
    </source>
</evidence>
<reference key="1">
    <citation type="journal article" date="2006" name="Dev. Cell">
        <title>Targeting of host Rab GTPase function by the intravacuolar pathogen Legionella pneumophila.</title>
        <authorList>
            <person name="Machner M.P."/>
            <person name="Isberg R.R."/>
        </authorList>
    </citation>
    <scope>NUCLEOTIDE SEQUENCE [MRNA]</scope>
    <scope>FUNCTION AS A GUANINE NUCLEOTIDE EXCHANGE FACTOR</scope>
    <scope>SUBCELLULAR LOCATION</scope>
    <source>
        <strain>Philadelphia 1 / ATCC 33152 / DSM 7513</strain>
    </source>
</reference>
<reference key="2">
    <citation type="journal article" date="2004" name="Science">
        <title>The genomic sequence of the accidental pathogen Legionella pneumophila.</title>
        <authorList>
            <person name="Chien M."/>
            <person name="Morozova I."/>
            <person name="Shi S."/>
            <person name="Sheng H."/>
            <person name="Chen J."/>
            <person name="Gomez S.M."/>
            <person name="Asamani G."/>
            <person name="Hill K."/>
            <person name="Nuara J."/>
            <person name="Feder M."/>
            <person name="Rineer J."/>
            <person name="Greenberg J.J."/>
            <person name="Steshenko V."/>
            <person name="Park S.H."/>
            <person name="Zhao B."/>
            <person name="Teplitskaya E."/>
            <person name="Edwards J.R."/>
            <person name="Pampou S."/>
            <person name="Georghiou A."/>
            <person name="Chou I.-C."/>
            <person name="Iannuccilli W."/>
            <person name="Ulz M.E."/>
            <person name="Kim D.H."/>
            <person name="Geringer-Sameth A."/>
            <person name="Goldsberry C."/>
            <person name="Morozov P."/>
            <person name="Fischer S.G."/>
            <person name="Segal G."/>
            <person name="Qu X."/>
            <person name="Rzhetsky A."/>
            <person name="Zhang P."/>
            <person name="Cayanis E."/>
            <person name="De Jong P.J."/>
            <person name="Ju J."/>
            <person name="Kalachikov S."/>
            <person name="Shuman H.A."/>
            <person name="Russo J.J."/>
        </authorList>
    </citation>
    <scope>NUCLEOTIDE SEQUENCE [LARGE SCALE GENOMIC DNA]</scope>
    <source>
        <strain>Philadelphia 1 / ATCC 33152 / DSM 7513</strain>
    </source>
</reference>
<reference key="3">
    <citation type="journal article" date="2007" name="Science">
        <title>A bifunctional bacterial protein links GDI displacement to Rab1 activation.</title>
        <authorList>
            <person name="Machner M.P."/>
            <person name="Isberg R.R."/>
        </authorList>
    </citation>
    <scope>FUNCTION</scope>
    <source>
        <strain>Philadelphia 1 / ATCC 33152 / DSM 7513</strain>
    </source>
</reference>
<reference key="4">
    <citation type="journal article" date="2011" name="Nature">
        <title>Modulation of Rab GTPase function by a protein phosphocholine transferase.</title>
        <authorList>
            <person name="Mukherjee S."/>
            <person name="Liu X."/>
            <person name="Arasaki K."/>
            <person name="McDonough J."/>
            <person name="Galan J.E."/>
            <person name="Roy C.R."/>
        </authorList>
    </citation>
    <scope>FUNCTION</scope>
    <source>
        <strain>Philadelphia 1 / ATCC 33152 / DSM 7513</strain>
    </source>
</reference>
<reference key="5">
    <citation type="journal article" date="2009" name="Mol. Cell">
        <title>RabGDI displacement by DrrA from Legionella is a consequence of its guanine nucleotide exchange activity.</title>
        <authorList>
            <person name="Schoebel S."/>
            <person name="Oesterlin L.K."/>
            <person name="Blankenfeldt W."/>
            <person name="Goody R.S."/>
            <person name="Itzen A."/>
        </authorList>
    </citation>
    <scope>X-RAY CRYSTALLOGRAPHY (1.80 ANGSTROMS) OF 340-533</scope>
    <scope>FUNCTION</scope>
    <scope>MUTAGENESIS OF 451-ASN--ARG-453; ASP-480 AND SER-483</scope>
    <source>
        <strain>Philadelphia 1 / ATCC 33152 / DSM 7513</strain>
    </source>
</reference>
<reference key="6">
    <citation type="journal article" date="2010" name="EMBO J.">
        <title>Structural insights into the dual nucleotide exchange and GDI displacement activity of SidM/DrrA.</title>
        <authorList>
            <person name="Suh H.Y."/>
            <person name="Lee D.W."/>
            <person name="Lee K.H."/>
            <person name="Ku B."/>
            <person name="Choi S.J."/>
            <person name="Woo J.S."/>
            <person name="Kim Y.G."/>
            <person name="Oh B.H."/>
        </authorList>
    </citation>
    <scope>X-RAY CRYSTALLOGRAPHY (1.50 ANGSTROMS) OF 317-533</scope>
    <scope>FUNCTION</scope>
    <scope>INTERACTION WITH HOST RAB1A</scope>
    <scope>MUTAGENESIS OF ALA-435</scope>
    <source>
        <strain>Philadelphia 1 / ATCC 33152 / DSM 7513</strain>
    </source>
</reference>
<reference key="7">
    <citation type="journal article" date="2010" name="Proc. Natl. Acad. Sci. U.S.A.">
        <title>Structural mechanism of host Rab1 activation by the bifunctional Legionella type IV effector SidM/DrrA.</title>
        <authorList>
            <person name="Zhu Y."/>
            <person name="Hu L."/>
            <person name="Zhou Y."/>
            <person name="Yao Q."/>
            <person name="Liu L."/>
            <person name="Shao F."/>
        </authorList>
    </citation>
    <scope>X-RAY CRYSTALLOGRAPHY (2.85 ANGSTROMS) OF 193-550</scope>
    <scope>FUNCTION</scope>
    <scope>INTERACTION WITH HOST RAB1A</scope>
    <scope>MUTAGENESIS OF TRP-410; GLY-431; ALA-435; 451-ASN--ARG-453; ARG-541; LYS-568 AND THR-619</scope>
    <source>
        <strain>Philadelphia 1 / ATCC 33152 / DSM 7513</strain>
    </source>
</reference>
<reference key="8">
    <citation type="journal article" date="2010" name="EMBO Rep.">
        <title>High-affinity binding of phosphatidylinositol 4-phosphate by Legionella pneumophila DrrA.</title>
        <authorList>
            <person name="Schoebel S."/>
            <person name="Blankenfeldt W."/>
            <person name="Goody R.S."/>
            <person name="Itzen A."/>
        </authorList>
    </citation>
    <scope>X-RAY CRYSTALLOGRAPHY (2.50 ANGSTROMS) OF 340-647</scope>
    <scope>PTDINS(4)P-BINDING</scope>
    <source>
        <strain>Philadelphia 1 / ATCC 33152 / DSM 7513</strain>
    </source>
</reference>
<protein>
    <recommendedName>
        <fullName>Multifunctional virulence effector protein DrrA</fullName>
    </recommendedName>
    <alternativeName>
        <fullName>Defects in Rab1 recruitment protein A</fullName>
    </alternativeName>
    <domain>
        <recommendedName>
            <fullName>Protein adenylyltransferase</fullName>
            <shortName>AMPylator</shortName>
            <ecNumber>2.7.7.108</ecNumber>
        </recommendedName>
        <alternativeName>
            <fullName>Protein guanylyltransferase</fullName>
            <shortName>GMPylator</shortName>
            <ecNumber>2.7.7.n6</ecNumber>
        </alternativeName>
    </domain>
    <domain>
        <recommendedName>
            <fullName>Rab1 guanine nucleotide exchange factor</fullName>
        </recommendedName>
    </domain>
</protein>
<feature type="chain" id="PRO_0000417545" description="Multifunctional virulence effector protein DrrA">
    <location>
        <begin position="1"/>
        <end position="647"/>
    </location>
</feature>
<feature type="region of interest" description="Protein adenylyltransferase/guanylyltransferase">
    <location>
        <begin position="1"/>
        <end position="339"/>
    </location>
</feature>
<feature type="region of interest" description="Rab1 guanine nucleotide exchange factor">
    <location>
        <begin position="340"/>
        <end position="520"/>
    </location>
</feature>
<feature type="region of interest" description="P4M region">
    <location>
        <begin position="544"/>
        <end position="647"/>
    </location>
</feature>
<feature type="mutagenesis site" description="Almost abolishes GEF and GDF activities, but still binds Rab1." evidence="6">
    <original>W</original>
    <variation>D</variation>
    <location>
        <position position="410"/>
    </location>
</feature>
<feature type="mutagenesis site" description="Abolishes GEF and GDF activities, but still binds Rab1." evidence="6">
    <original>G</original>
    <variation>D</variation>
    <location>
        <position position="431"/>
    </location>
</feature>
<feature type="mutagenesis site" description="Abolishes GEF and GDF activities, but still binds Rab1." evidence="4 6">
    <original>A</original>
    <variation>D</variation>
    <variation>E</variation>
    <location>
        <position position="435"/>
    </location>
</feature>
<feature type="mutagenesis site" description="Almost abolishes GEF and GDF activities, with a more severe effect on GEF activity." evidence="5 6">
    <original>NER</original>
    <variation>AEA</variation>
    <location>
        <begin position="451"/>
        <end position="453"/>
    </location>
</feature>
<feature type="mutagenesis site" description="Slightly impairs GEF and GDF activities; when associated with A-483." evidence="5">
    <original>D</original>
    <variation>A</variation>
    <location>
        <position position="480"/>
    </location>
</feature>
<feature type="mutagenesis site" description="Slightly impairs GEF and GDF activities; when associated with A-480." evidence="5">
    <original>S</original>
    <variation>A</variation>
    <location>
        <position position="483"/>
    </location>
</feature>
<feature type="mutagenesis site" description="Abolishes PtdIns(4)P-binding; when associated with A-568." evidence="6">
    <original>R</original>
    <variation>A</variation>
    <location>
        <position position="541"/>
    </location>
</feature>
<feature type="mutagenesis site" description="Abolishes PtdIns(4)P-binding; when associated with A-541 or A-619." evidence="6">
    <original>K</original>
    <variation>A</variation>
    <location>
        <position position="568"/>
    </location>
</feature>
<feature type="mutagenesis site" description="Abolishes PtdIns(4)P-binding; when associated with A-568." evidence="6">
    <original>T</original>
    <variation>A</variation>
    <location>
        <position position="619"/>
    </location>
</feature>
<feature type="helix" evidence="12">
    <location>
        <begin position="214"/>
        <end position="224"/>
    </location>
</feature>
<feature type="helix" evidence="12">
    <location>
        <begin position="240"/>
        <end position="243"/>
    </location>
</feature>
<feature type="helix" evidence="12">
    <location>
        <begin position="245"/>
        <end position="258"/>
    </location>
</feature>
<feature type="helix" evidence="12">
    <location>
        <begin position="271"/>
        <end position="280"/>
    </location>
</feature>
<feature type="helix" evidence="12">
    <location>
        <begin position="286"/>
        <end position="307"/>
    </location>
</feature>
<feature type="helix" evidence="12">
    <location>
        <begin position="320"/>
        <end position="322"/>
    </location>
</feature>
<feature type="helix" evidence="9">
    <location>
        <begin position="336"/>
        <end position="361"/>
    </location>
</feature>
<feature type="helix" evidence="9">
    <location>
        <begin position="365"/>
        <end position="381"/>
    </location>
</feature>
<feature type="helix" evidence="9">
    <location>
        <begin position="386"/>
        <end position="389"/>
    </location>
</feature>
<feature type="helix" evidence="9">
    <location>
        <begin position="390"/>
        <end position="393"/>
    </location>
</feature>
<feature type="helix" evidence="9">
    <location>
        <begin position="400"/>
        <end position="419"/>
    </location>
</feature>
<feature type="helix" evidence="9">
    <location>
        <begin position="428"/>
        <end position="447"/>
    </location>
</feature>
<feature type="strand" evidence="10">
    <location>
        <begin position="450"/>
        <end position="452"/>
    </location>
</feature>
<feature type="helix" evidence="11">
    <location>
        <begin position="458"/>
        <end position="460"/>
    </location>
</feature>
<feature type="helix" evidence="9">
    <location>
        <begin position="464"/>
        <end position="478"/>
    </location>
</feature>
<feature type="helix" evidence="9">
    <location>
        <begin position="490"/>
        <end position="506"/>
    </location>
</feature>
<feature type="helix" evidence="9">
    <location>
        <begin position="512"/>
        <end position="520"/>
    </location>
</feature>
<feature type="strand" evidence="10">
    <location>
        <begin position="526"/>
        <end position="528"/>
    </location>
</feature>
<feature type="turn" evidence="12">
    <location>
        <begin position="530"/>
        <end position="533"/>
    </location>
</feature>
<feature type="helix" evidence="13">
    <location>
        <begin position="557"/>
        <end position="559"/>
    </location>
</feature>
<feature type="helix" evidence="13">
    <location>
        <begin position="564"/>
        <end position="579"/>
    </location>
</feature>
<feature type="helix" evidence="13">
    <location>
        <begin position="585"/>
        <end position="596"/>
    </location>
</feature>
<feature type="helix" evidence="13">
    <location>
        <begin position="599"/>
        <end position="605"/>
    </location>
</feature>
<feature type="helix" evidence="13">
    <location>
        <begin position="610"/>
        <end position="615"/>
    </location>
</feature>
<feature type="helix" evidence="13">
    <location>
        <begin position="620"/>
        <end position="645"/>
    </location>
</feature>
<proteinExistence type="evidence at protein level"/>
<organism>
    <name type="scientific">Legionella pneumophila subsp. pneumophila (strain Philadelphia 1 / ATCC 33152 / DSM 7513)</name>
    <dbReference type="NCBI Taxonomy" id="272624"/>
    <lineage>
        <taxon>Bacteria</taxon>
        <taxon>Pseudomonadati</taxon>
        <taxon>Pseudomonadota</taxon>
        <taxon>Gammaproteobacteria</taxon>
        <taxon>Legionellales</taxon>
        <taxon>Legionellaceae</taxon>
        <taxon>Legionella</taxon>
    </lineage>
</organism>
<gene>
    <name type="primary">drrA</name>
    <name type="synonym">sidM</name>
    <name type="ordered locus">lpg2464</name>
</gene>
<sequence>MSIMGRIKMSVNEEQFGSLYSDERDKPLLSPTAQKKFEEYQNKLANLSKIIRENEGNEVSPWQEWENGLRQIYKEMIYDAFDALGVEMPKDMEVHFAGSLAKAQATEYSDLDAFVIVKNDEDIKKVKPVFDALNNLCQRIFTASNQIYPDPIGINPSRLIGTPDDLFGMLKDGMVADVEATAMSILTSKPVLPRYELGEELRDKIKQEPSFSNMVSAKKFYNKAIKDFTAPKEGAEVVSVKTHIMRPIDFMLMGLREEFNLYSEDGAHLSAPGTIRLLREKNLLPEEQIARIESVYNQAMSKRFELHAEHKKEHDEMPYSDAKAMLDEVAKIRELGVQRVTRIENLENAKKLWDNANSMLEKGNISGYLKAANELHKFMKEKNLKEDDLRPELSDKTISPKGYAILQSLWGAASDYSRAAATLTESTVEPGLVSAVNKMSAFFMDCKLSPNERATPDPDFKVGKSKILVGIMQFIKDVADPTSKIWMHNTKALMNHKIAAIQKLERSNNVNDETLESVLSSKGENLSEYLSYKYATKDEGREHRYTASTENFKNVKEKYQQMRGDALKTEILADFKDKLAEATDEQSLKQIVAELKSKDEYRILAKGQGLTTQLLGLKTSSVSSFEKMVEETRESIKSQERQTIKIK</sequence>
<name>DRRA_LEGPH</name>
<accession>Q5ZSQ3</accession>
<keyword id="KW-0002">3D-structure</keyword>
<keyword id="KW-0067">ATP-binding</keyword>
<keyword id="KW-0344">Guanine-nucleotide releasing factor</keyword>
<keyword id="KW-1036">Host cytoplasmic vesicle</keyword>
<keyword id="KW-1043">Host membrane</keyword>
<keyword id="KW-0446">Lipid-binding</keyword>
<keyword id="KW-0472">Membrane</keyword>
<keyword id="KW-0511">Multifunctional enzyme</keyword>
<keyword id="KW-0547">Nucleotide-binding</keyword>
<keyword id="KW-0548">Nucleotidyltransferase</keyword>
<keyword id="KW-1185">Reference proteome</keyword>
<keyword id="KW-0964">Secreted</keyword>
<keyword id="KW-0808">Transferase</keyword>
<keyword id="KW-0843">Virulence</keyword>